<organism>
    <name type="scientific">Halobacterium salinarum (strain ATCC 700922 / JCM 11081 / NRC-1)</name>
    <name type="common">Halobacterium halobium</name>
    <dbReference type="NCBI Taxonomy" id="64091"/>
    <lineage>
        <taxon>Archaea</taxon>
        <taxon>Methanobacteriati</taxon>
        <taxon>Methanobacteriota</taxon>
        <taxon>Stenosarchaea group</taxon>
        <taxon>Halobacteria</taxon>
        <taxon>Halobacteriales</taxon>
        <taxon>Halobacteriaceae</taxon>
        <taxon>Halobacterium</taxon>
        <taxon>Halobacterium salinarum NRC-34001</taxon>
    </lineage>
</organism>
<gene>
    <name evidence="1" type="primary">aroB'</name>
    <name type="ordered locus">VNG_0310C</name>
</gene>
<comment type="function">
    <text evidence="1">Catalyzes the oxidative deamination and cyclization of 2-amino-3,7-dideoxy-D-threo-hept-6-ulosonic acid (ADH) to yield 3-dehydroquinate (DHQ), which is fed into the canonical shikimic pathway of aromatic amino acid biosynthesis.</text>
</comment>
<comment type="catalytic activity">
    <reaction evidence="1">
        <text>2-amino-2,3,7-trideoxy-D-lyxo-hept-6-ulosonate + NAD(+) + H2O = 3-dehydroquinate + NH4(+) + NADH + H(+)</text>
        <dbReference type="Rhea" id="RHEA:25956"/>
        <dbReference type="ChEBI" id="CHEBI:15377"/>
        <dbReference type="ChEBI" id="CHEBI:15378"/>
        <dbReference type="ChEBI" id="CHEBI:28938"/>
        <dbReference type="ChEBI" id="CHEBI:32364"/>
        <dbReference type="ChEBI" id="CHEBI:57540"/>
        <dbReference type="ChEBI" id="CHEBI:57945"/>
        <dbReference type="ChEBI" id="CHEBI:58859"/>
        <dbReference type="EC" id="1.4.1.24"/>
    </reaction>
</comment>
<comment type="similarity">
    <text evidence="1">Belongs to the archaeal-type DHQ synthase family.</text>
</comment>
<sequence length="387" mass="41474">MTRSVWLKADDEVGDWETRKRRITAGLEAGVDWVLVDRADVARVRELGSVNVAAFSTDDANVIEDAEGTDADPDAYVAGKDGEGDGTVDLPADFSGSADLSALRRGHADTAYVRIRDEEYEPFAQAAAEVADHTIVVGDDWTIIPLENLIARIGEETTLVAGVESAAEAETAFETLDIGADAVLLDSDDPDEIRRTVSVRDAADREHLALSTATITTIEEAGSADRVCVDTGSLLADDEGMLVGSMSRGLFFVHAETAQSPYVAARPFRVNAGAVHAYVRTPDGGTKYLAELGSGDEVQVVDGDGRTRSAVVGRAKIEKRPMFRVEAETDDGDRIETLLQNAETIKVATPNGRTAVTDLSVGDDLHVFLQDGGRHFGEAIDERIIEQ</sequence>
<name>DHQS_HALSA</name>
<proteinExistence type="inferred from homology"/>
<reference key="1">
    <citation type="journal article" date="2000" name="Proc. Natl. Acad. Sci. U.S.A.">
        <title>Genome sequence of Halobacterium species NRC-1.</title>
        <authorList>
            <person name="Ng W.V."/>
            <person name="Kennedy S.P."/>
            <person name="Mahairas G.G."/>
            <person name="Berquist B."/>
            <person name="Pan M."/>
            <person name="Shukla H.D."/>
            <person name="Lasky S.R."/>
            <person name="Baliga N.S."/>
            <person name="Thorsson V."/>
            <person name="Sbrogna J."/>
            <person name="Swartzell S."/>
            <person name="Weir D."/>
            <person name="Hall J."/>
            <person name="Dahl T.A."/>
            <person name="Welti R."/>
            <person name="Goo Y.A."/>
            <person name="Leithauser B."/>
            <person name="Keller K."/>
            <person name="Cruz R."/>
            <person name="Danson M.J."/>
            <person name="Hough D.W."/>
            <person name="Maddocks D.G."/>
            <person name="Jablonski P.E."/>
            <person name="Krebs M.P."/>
            <person name="Angevine C.M."/>
            <person name="Dale H."/>
            <person name="Isenbarger T.A."/>
            <person name="Peck R.F."/>
            <person name="Pohlschroder M."/>
            <person name="Spudich J.L."/>
            <person name="Jung K.-H."/>
            <person name="Alam M."/>
            <person name="Freitas T."/>
            <person name="Hou S."/>
            <person name="Daniels C.J."/>
            <person name="Dennis P.P."/>
            <person name="Omer A.D."/>
            <person name="Ebhardt H."/>
            <person name="Lowe T.M."/>
            <person name="Liang P."/>
            <person name="Riley M."/>
            <person name="Hood L."/>
            <person name="DasSarma S."/>
        </authorList>
    </citation>
    <scope>NUCLEOTIDE SEQUENCE [LARGE SCALE GENOMIC DNA]</scope>
    <source>
        <strain>ATCC 700922 / JCM 11081 / NRC-1</strain>
    </source>
</reference>
<protein>
    <recommendedName>
        <fullName evidence="1">3-dehydroquinate synthase</fullName>
        <shortName evidence="1">DHQ synthase</shortName>
        <ecNumber evidence="1">1.4.1.24</ecNumber>
    </recommendedName>
    <alternativeName>
        <fullName evidence="1">3-dehydroquinate synthase II</fullName>
    </alternativeName>
</protein>
<keyword id="KW-0028">Amino-acid biosynthesis</keyword>
<keyword id="KW-0057">Aromatic amino acid biosynthesis</keyword>
<keyword id="KW-0520">NAD</keyword>
<keyword id="KW-0560">Oxidoreductase</keyword>
<keyword id="KW-1185">Reference proteome</keyword>
<accession>Q9HSB6</accession>
<feature type="chain" id="PRO_0000058767" description="3-dehydroquinate synthase">
    <location>
        <begin position="1"/>
        <end position="387"/>
    </location>
</feature>
<evidence type="ECO:0000255" key="1">
    <source>
        <dbReference type="HAMAP-Rule" id="MF_01244"/>
    </source>
</evidence>
<dbReference type="EC" id="1.4.1.24" evidence="1"/>
<dbReference type="EMBL" id="AE004437">
    <property type="protein sequence ID" value="AAG18891.1"/>
    <property type="molecule type" value="Genomic_DNA"/>
</dbReference>
<dbReference type="PIR" id="G84190">
    <property type="entry name" value="G84190"/>
</dbReference>
<dbReference type="RefSeq" id="WP_010902185.1">
    <property type="nucleotide sequence ID" value="NC_002607.1"/>
</dbReference>
<dbReference type="SMR" id="Q9HSB6"/>
<dbReference type="FunCoup" id="Q9HSB6">
    <property type="interactions" value="8"/>
</dbReference>
<dbReference type="STRING" id="64091.VNG_0310C"/>
<dbReference type="PaxDb" id="64091-VNG_0310C"/>
<dbReference type="KEGG" id="hal:VNG_0310C"/>
<dbReference type="PATRIC" id="fig|64091.14.peg.230"/>
<dbReference type="HOGENOM" id="CLU_056379_0_0_2"/>
<dbReference type="InParanoid" id="Q9HSB6"/>
<dbReference type="OrthoDB" id="10265at2157"/>
<dbReference type="PhylomeDB" id="Q9HSB6"/>
<dbReference type="Proteomes" id="UP000000554">
    <property type="component" value="Chromosome"/>
</dbReference>
<dbReference type="GO" id="GO:0003856">
    <property type="term" value="F:3-dehydroquinate synthase activity"/>
    <property type="evidence" value="ECO:0007669"/>
    <property type="project" value="InterPro"/>
</dbReference>
<dbReference type="GO" id="GO:0102042">
    <property type="term" value="F:dehydroquinate synthase activity"/>
    <property type="evidence" value="ECO:0007669"/>
    <property type="project" value="UniProtKB-EC"/>
</dbReference>
<dbReference type="GO" id="GO:0051287">
    <property type="term" value="F:NAD binding"/>
    <property type="evidence" value="ECO:0007669"/>
    <property type="project" value="UniProtKB-UniRule"/>
</dbReference>
<dbReference type="GO" id="GO:0008652">
    <property type="term" value="P:amino acid biosynthetic process"/>
    <property type="evidence" value="ECO:0007669"/>
    <property type="project" value="UniProtKB-KW"/>
</dbReference>
<dbReference type="GO" id="GO:0009073">
    <property type="term" value="P:aromatic amino acid family biosynthetic process"/>
    <property type="evidence" value="ECO:0007669"/>
    <property type="project" value="UniProtKB-UniRule"/>
</dbReference>
<dbReference type="HAMAP" id="MF_01244">
    <property type="entry name" value="Arch_DHQ_synthase"/>
    <property type="match status" value="1"/>
</dbReference>
<dbReference type="InterPro" id="IPR002812">
    <property type="entry name" value="DHQ_synth"/>
</dbReference>
<dbReference type="NCBIfam" id="NF002623">
    <property type="entry name" value="PRK02290.1-1"/>
    <property type="match status" value="1"/>
</dbReference>
<dbReference type="PANTHER" id="PTHR33563">
    <property type="match status" value="1"/>
</dbReference>
<dbReference type="PANTHER" id="PTHR33563:SF1">
    <property type="entry name" value="3-DEHYDROQUINATE SYNTHASE"/>
    <property type="match status" value="1"/>
</dbReference>
<dbReference type="Pfam" id="PF01959">
    <property type="entry name" value="DHQS"/>
    <property type="match status" value="1"/>
</dbReference>
<dbReference type="PIRSF" id="PIRSF006655">
    <property type="entry name" value="DHQ_synth"/>
    <property type="match status" value="1"/>
</dbReference>